<organism>
    <name type="scientific">Mus musculus</name>
    <name type="common">Mouse</name>
    <dbReference type="NCBI Taxonomy" id="10090"/>
    <lineage>
        <taxon>Eukaryota</taxon>
        <taxon>Metazoa</taxon>
        <taxon>Chordata</taxon>
        <taxon>Craniata</taxon>
        <taxon>Vertebrata</taxon>
        <taxon>Euteleostomi</taxon>
        <taxon>Mammalia</taxon>
        <taxon>Eutheria</taxon>
        <taxon>Euarchontoglires</taxon>
        <taxon>Glires</taxon>
        <taxon>Rodentia</taxon>
        <taxon>Myomorpha</taxon>
        <taxon>Muroidea</taxon>
        <taxon>Muridae</taxon>
        <taxon>Murinae</taxon>
        <taxon>Mus</taxon>
        <taxon>Mus</taxon>
    </lineage>
</organism>
<accession>Q8C0M0</accession>
<accession>Q3TC49</accession>
<accession>Q3UWJ3</accession>
<accession>Q69Z65</accession>
<accession>Q6NZK7</accession>
<accession>Q8BLZ2</accession>
<accession>Q8BWK9</accession>
<feature type="chain" id="PRO_0000280722" description="GATOR2 complex protein WDR59">
    <location>
        <begin position="1"/>
        <end position="992"/>
    </location>
</feature>
<feature type="repeat" description="WD 1">
    <location>
        <begin position="57"/>
        <end position="98"/>
    </location>
</feature>
<feature type="repeat" description="WD 2">
    <location>
        <begin position="103"/>
        <end position="143"/>
    </location>
</feature>
<feature type="repeat" description="WD 3">
    <location>
        <begin position="146"/>
        <end position="185"/>
    </location>
</feature>
<feature type="repeat" description="WD 4">
    <location>
        <begin position="189"/>
        <end position="229"/>
    </location>
</feature>
<feature type="repeat" description="WD 5">
    <location>
        <begin position="232"/>
        <end position="276"/>
    </location>
</feature>
<feature type="repeat" description="WD 6">
    <location>
        <begin position="278"/>
        <end position="318"/>
    </location>
</feature>
<feature type="repeat" description="WD 7">
    <location>
        <begin position="319"/>
        <end position="362"/>
    </location>
</feature>
<feature type="domain" description="RWD" evidence="2">
    <location>
        <begin position="393"/>
        <end position="494"/>
    </location>
</feature>
<feature type="repeat" description="WD 8">
    <location>
        <begin position="660"/>
        <end position="706"/>
    </location>
</feature>
<feature type="zinc finger region" description="C4-type" evidence="1">
    <location>
        <begin position="919"/>
        <end position="939"/>
    </location>
</feature>
<feature type="zinc finger region" description="RING-type; atypical" evidence="1">
    <location>
        <begin position="940"/>
        <end position="989"/>
    </location>
</feature>
<feature type="region of interest" description="Disordered" evidence="3">
    <location>
        <begin position="343"/>
        <end position="373"/>
    </location>
</feature>
<feature type="region of interest" description="Disordered" evidence="3">
    <location>
        <begin position="849"/>
        <end position="870"/>
    </location>
</feature>
<feature type="compositionally biased region" description="Basic and acidic residues" evidence="3">
    <location>
        <begin position="344"/>
        <end position="373"/>
    </location>
</feature>
<feature type="compositionally biased region" description="Basic and acidic residues" evidence="3">
    <location>
        <begin position="853"/>
        <end position="869"/>
    </location>
</feature>
<feature type="binding site" evidence="1">
    <location>
        <position position="920"/>
    </location>
    <ligand>
        <name>Zn(2+)</name>
        <dbReference type="ChEBI" id="CHEBI:29105"/>
        <label>1</label>
    </ligand>
</feature>
<feature type="binding site" evidence="1">
    <location>
        <position position="923"/>
    </location>
    <ligand>
        <name>Zn(2+)</name>
        <dbReference type="ChEBI" id="CHEBI:29105"/>
        <label>1</label>
    </ligand>
</feature>
<feature type="binding site" evidence="1">
    <location>
        <position position="932"/>
    </location>
    <ligand>
        <name>Zn(2+)</name>
        <dbReference type="ChEBI" id="CHEBI:29105"/>
        <label>1</label>
    </ligand>
</feature>
<feature type="binding site" evidence="1">
    <location>
        <position position="935"/>
    </location>
    <ligand>
        <name>Zn(2+)</name>
        <dbReference type="ChEBI" id="CHEBI:29105"/>
        <label>1</label>
    </ligand>
</feature>
<feature type="binding site" evidence="1">
    <location>
        <position position="945"/>
    </location>
    <ligand>
        <name>Zn(2+)</name>
        <dbReference type="ChEBI" id="CHEBI:29105"/>
        <label>2</label>
    </ligand>
</feature>
<feature type="binding site" evidence="1">
    <location>
        <position position="956"/>
    </location>
    <ligand>
        <name>Zn(2+)</name>
        <dbReference type="ChEBI" id="CHEBI:29105"/>
        <label>3</label>
    </ligand>
</feature>
<feature type="binding site" evidence="1">
    <location>
        <position position="961"/>
    </location>
    <ligand>
        <name>Zn(2+)</name>
        <dbReference type="ChEBI" id="CHEBI:29105"/>
        <label>4</label>
    </ligand>
</feature>
<feature type="binding site" evidence="1">
    <location>
        <position position="964"/>
    </location>
    <ligand>
        <name>Zn(2+)</name>
        <dbReference type="ChEBI" id="CHEBI:29105"/>
        <label>2</label>
    </ligand>
</feature>
<feature type="binding site" evidence="1">
    <location>
        <position position="967"/>
    </location>
    <ligand>
        <name>Zn(2+)</name>
        <dbReference type="ChEBI" id="CHEBI:29105"/>
        <label>2</label>
    </ligand>
</feature>
<feature type="binding site" evidence="1">
    <location>
        <position position="978"/>
    </location>
    <ligand>
        <name>Zn(2+)</name>
        <dbReference type="ChEBI" id="CHEBI:29105"/>
        <label>4</label>
    </ligand>
</feature>
<feature type="binding site" evidence="1">
    <location>
        <position position="982"/>
    </location>
    <ligand>
        <name>Zn(2+)</name>
        <dbReference type="ChEBI" id="CHEBI:29105"/>
        <label>4</label>
    </ligand>
</feature>
<feature type="binding site" evidence="1">
    <location>
        <position position="984"/>
    </location>
    <ligand>
        <name>Zn(2+)</name>
        <dbReference type="ChEBI" id="CHEBI:29105"/>
        <label>3</label>
    </ligand>
</feature>
<feature type="binding site" evidence="1">
    <location>
        <position position="986"/>
    </location>
    <ligand>
        <name>Zn(2+)</name>
        <dbReference type="ChEBI" id="CHEBI:29105"/>
        <label>3</label>
    </ligand>
</feature>
<feature type="modified residue" description="Phosphoserine" evidence="1">
    <location>
        <position position="564"/>
    </location>
</feature>
<feature type="modified residue" description="Phosphoserine" evidence="11">
    <location>
        <position position="839"/>
    </location>
</feature>
<feature type="modified residue" description="Phosphoserine" evidence="11">
    <location>
        <position position="840"/>
    </location>
</feature>
<feature type="modified residue" description="Phosphoserine" evidence="1">
    <location>
        <position position="848"/>
    </location>
</feature>
<feature type="splice variant" id="VSP_023885" description="In isoform 3." evidence="5">
    <original>R</original>
    <variation>RMSPRSARRRWSIQAINDFP</variation>
    <location>
        <position position="622"/>
    </location>
</feature>
<feature type="splice variant" id="VSP_023886" description="In isoform 2 and isoform 3." evidence="5 6">
    <location>
        <begin position="733"/>
        <end position="750"/>
    </location>
</feature>
<feature type="sequence conflict" description="In Ref. 3; BAC27062." evidence="7" ref="3">
    <original>V</original>
    <variation>A</variation>
    <location>
        <position position="154"/>
    </location>
</feature>
<feature type="sequence conflict" description="In Ref. 3; BAC27062." evidence="7" ref="3">
    <original>D</original>
    <variation>G</variation>
    <location>
        <position position="355"/>
    </location>
</feature>
<feature type="sequence conflict" description="In Ref. 3; BAE22922." evidence="7" ref="3">
    <original>D</original>
    <variation>E</variation>
    <location>
        <position position="499"/>
    </location>
</feature>
<feature type="sequence conflict" description="In Ref. 3; BAC27062." evidence="7" ref="3">
    <location>
        <position position="825"/>
    </location>
</feature>
<feature type="sequence conflict" description="In Ref. 3; BAC34902." evidence="7" ref="3">
    <original>H</original>
    <variation>L</variation>
    <location>
        <position position="961"/>
    </location>
</feature>
<name>WDR59_MOUSE</name>
<protein>
    <recommendedName>
        <fullName evidence="7">GATOR2 complex protein WDR59</fullName>
    </recommendedName>
    <alternativeName>
        <fullName>CUL4- and DDB1-associated WDR protein 12</fullName>
    </alternativeName>
    <alternativeName>
        <fullName evidence="10">WD repeat-containing protein 59</fullName>
    </alternativeName>
</protein>
<keyword id="KW-0025">Alternative splicing</keyword>
<keyword id="KW-0458">Lysosome</keyword>
<keyword id="KW-0472">Membrane</keyword>
<keyword id="KW-0479">Metal-binding</keyword>
<keyword id="KW-0597">Phosphoprotein</keyword>
<keyword id="KW-1185">Reference proteome</keyword>
<keyword id="KW-0677">Repeat</keyword>
<keyword id="KW-0853">WD repeat</keyword>
<keyword id="KW-0862">Zinc</keyword>
<keyword id="KW-0863">Zinc-finger</keyword>
<dbReference type="EMBL" id="EF011622">
    <property type="protein sequence ID" value="ABK41112.1"/>
    <property type="molecule type" value="mRNA"/>
</dbReference>
<dbReference type="EMBL" id="AK173301">
    <property type="protein sequence ID" value="BAD32579.1"/>
    <property type="status" value="ALT_INIT"/>
    <property type="molecule type" value="mRNA"/>
</dbReference>
<dbReference type="EMBL" id="AK030644">
    <property type="protein sequence ID" value="BAC27062.1"/>
    <property type="molecule type" value="mRNA"/>
</dbReference>
<dbReference type="EMBL" id="AK040807">
    <property type="protein sequence ID" value="BAC30708.1"/>
    <property type="status" value="ALT_INIT"/>
    <property type="molecule type" value="mRNA"/>
</dbReference>
<dbReference type="EMBL" id="AK052262">
    <property type="protein sequence ID" value="BAC34902.1"/>
    <property type="molecule type" value="mRNA"/>
</dbReference>
<dbReference type="EMBL" id="AK136303">
    <property type="protein sequence ID" value="BAE22922.1"/>
    <property type="molecule type" value="mRNA"/>
</dbReference>
<dbReference type="EMBL" id="AK170910">
    <property type="protein sequence ID" value="BAE42108.1"/>
    <property type="status" value="ALT_SEQ"/>
    <property type="molecule type" value="mRNA"/>
</dbReference>
<dbReference type="EMBL" id="BC066082">
    <property type="protein sequence ID" value="AAH66082.1"/>
    <property type="molecule type" value="mRNA"/>
</dbReference>
<dbReference type="CCDS" id="CCDS52672.1">
    <molecule id="Q8C0M0-3"/>
</dbReference>
<dbReference type="CCDS" id="CCDS85613.1">
    <molecule id="Q8C0M0-2"/>
</dbReference>
<dbReference type="RefSeq" id="NP_001164213.1">
    <molecule id="Q8C0M0-2"/>
    <property type="nucleotide sequence ID" value="NM_001170742.2"/>
</dbReference>
<dbReference type="RefSeq" id="NP_001164214.1">
    <molecule id="Q8C0M0-3"/>
    <property type="nucleotide sequence ID" value="NM_001170743.2"/>
</dbReference>
<dbReference type="RefSeq" id="NP_795897.2">
    <property type="nucleotide sequence ID" value="NM_176923.4"/>
</dbReference>
<dbReference type="SMR" id="Q8C0M0"/>
<dbReference type="BioGRID" id="235303">
    <property type="interactions" value="7"/>
</dbReference>
<dbReference type="FunCoup" id="Q8C0M0">
    <property type="interactions" value="2601"/>
</dbReference>
<dbReference type="STRING" id="10090.ENSMUSP00000034437"/>
<dbReference type="GlyGen" id="Q8C0M0">
    <property type="glycosylation" value="3 sites, 1 N-linked glycan (1 site)"/>
</dbReference>
<dbReference type="iPTMnet" id="Q8C0M0"/>
<dbReference type="PhosphoSitePlus" id="Q8C0M0"/>
<dbReference type="jPOST" id="Q8C0M0"/>
<dbReference type="PaxDb" id="10090-ENSMUSP00000043671"/>
<dbReference type="PeptideAtlas" id="Q8C0M0"/>
<dbReference type="ProteomicsDB" id="275203">
    <molecule id="Q8C0M0-1"/>
</dbReference>
<dbReference type="ProteomicsDB" id="275204">
    <molecule id="Q8C0M0-2"/>
</dbReference>
<dbReference type="ProteomicsDB" id="275205">
    <molecule id="Q8C0M0-3"/>
</dbReference>
<dbReference type="Pumba" id="Q8C0M0"/>
<dbReference type="Antibodypedia" id="48159">
    <property type="antibodies" value="45 antibodies from 15 providers"/>
</dbReference>
<dbReference type="DNASU" id="319481"/>
<dbReference type="Ensembl" id="ENSMUST00000034437.8">
    <molecule id="Q8C0M0-3"/>
    <property type="protein sequence ID" value="ENSMUSP00000034437.8"/>
    <property type="gene ID" value="ENSMUSG00000031959.16"/>
</dbReference>
<dbReference type="Ensembl" id="ENSMUST00000038193.15">
    <molecule id="Q8C0M0-2"/>
    <property type="protein sequence ID" value="ENSMUSP00000043671.9"/>
    <property type="gene ID" value="ENSMUSG00000031959.16"/>
</dbReference>
<dbReference type="GeneID" id="319481"/>
<dbReference type="KEGG" id="mmu:319481"/>
<dbReference type="UCSC" id="uc009nmi.2">
    <molecule id="Q8C0M0-3"/>
    <property type="organism name" value="mouse"/>
</dbReference>
<dbReference type="UCSC" id="uc009nmj.2">
    <molecule id="Q8C0M0-2"/>
    <property type="organism name" value="mouse"/>
</dbReference>
<dbReference type="AGR" id="MGI:2442115"/>
<dbReference type="CTD" id="79726"/>
<dbReference type="MGI" id="MGI:2442115">
    <property type="gene designation" value="Wdr59"/>
</dbReference>
<dbReference type="VEuPathDB" id="HostDB:ENSMUSG00000031959"/>
<dbReference type="eggNOG" id="KOG0302">
    <property type="taxonomic scope" value="Eukaryota"/>
</dbReference>
<dbReference type="eggNOG" id="KOG0309">
    <property type="taxonomic scope" value="Eukaryota"/>
</dbReference>
<dbReference type="GeneTree" id="ENSGT00940000157600"/>
<dbReference type="InParanoid" id="Q8C0M0"/>
<dbReference type="OMA" id="HRRETCL"/>
<dbReference type="OrthoDB" id="5706at9989"/>
<dbReference type="PhylomeDB" id="Q8C0M0"/>
<dbReference type="TreeFam" id="TF314695"/>
<dbReference type="Reactome" id="R-MMU-9639288">
    <property type="pathway name" value="Amino acids regulate mTORC1"/>
</dbReference>
<dbReference type="BioGRID-ORCS" id="319481">
    <property type="hits" value="9 hits in 78 CRISPR screens"/>
</dbReference>
<dbReference type="ChiTaRS" id="Wdr59">
    <property type="organism name" value="mouse"/>
</dbReference>
<dbReference type="PRO" id="PR:Q8C0M0"/>
<dbReference type="Proteomes" id="UP000000589">
    <property type="component" value="Chromosome 8"/>
</dbReference>
<dbReference type="RNAct" id="Q8C0M0">
    <property type="molecule type" value="protein"/>
</dbReference>
<dbReference type="Bgee" id="ENSMUSG00000031959">
    <property type="expression patterns" value="Expressed in embryonic brain and 98 other cell types or tissues"/>
</dbReference>
<dbReference type="ExpressionAtlas" id="Q8C0M0">
    <property type="expression patterns" value="baseline and differential"/>
</dbReference>
<dbReference type="GO" id="GO:0005829">
    <property type="term" value="C:cytosol"/>
    <property type="evidence" value="ECO:0007669"/>
    <property type="project" value="Ensembl"/>
</dbReference>
<dbReference type="GO" id="GO:0061700">
    <property type="term" value="C:GATOR2 complex"/>
    <property type="evidence" value="ECO:0000250"/>
    <property type="project" value="UniProtKB"/>
</dbReference>
<dbReference type="GO" id="GO:0005765">
    <property type="term" value="C:lysosomal membrane"/>
    <property type="evidence" value="ECO:0000250"/>
    <property type="project" value="UniProtKB"/>
</dbReference>
<dbReference type="GO" id="GO:0008270">
    <property type="term" value="F:zinc ion binding"/>
    <property type="evidence" value="ECO:0007669"/>
    <property type="project" value="UniProtKB-KW"/>
</dbReference>
<dbReference type="GO" id="GO:0034198">
    <property type="term" value="P:cellular response to amino acid starvation"/>
    <property type="evidence" value="ECO:0007669"/>
    <property type="project" value="Ensembl"/>
</dbReference>
<dbReference type="GO" id="GO:0031669">
    <property type="term" value="P:cellular response to nutrient levels"/>
    <property type="evidence" value="ECO:0000250"/>
    <property type="project" value="UniProtKB"/>
</dbReference>
<dbReference type="GO" id="GO:1904263">
    <property type="term" value="P:positive regulation of TORC1 signaling"/>
    <property type="evidence" value="ECO:0000250"/>
    <property type="project" value="UniProtKB"/>
</dbReference>
<dbReference type="GO" id="GO:0072659">
    <property type="term" value="P:protein localization to plasma membrane"/>
    <property type="evidence" value="ECO:0000266"/>
    <property type="project" value="MGI"/>
</dbReference>
<dbReference type="CDD" id="cd16692">
    <property type="entry name" value="mRING-H2-C3H3C2_WDR59"/>
    <property type="match status" value="1"/>
</dbReference>
<dbReference type="FunFam" id="2.130.10.10:FF:001225">
    <property type="entry name" value="WD repeat domain 59"/>
    <property type="match status" value="1"/>
</dbReference>
<dbReference type="FunFam" id="2.130.10.10:FF:000266">
    <property type="entry name" value="WD repeat-containing protein 59 isoform X1"/>
    <property type="match status" value="1"/>
</dbReference>
<dbReference type="Gene3D" id="3.10.110.10">
    <property type="entry name" value="Ubiquitin Conjugating Enzyme"/>
    <property type="match status" value="1"/>
</dbReference>
<dbReference type="Gene3D" id="2.130.10.10">
    <property type="entry name" value="YVTN repeat-like/Quinoprotein amine dehydrogenase"/>
    <property type="match status" value="2"/>
</dbReference>
<dbReference type="InterPro" id="IPR006575">
    <property type="entry name" value="RWD_dom"/>
</dbReference>
<dbReference type="InterPro" id="IPR016135">
    <property type="entry name" value="UBQ-conjugating_enzyme/RWD"/>
</dbReference>
<dbReference type="InterPro" id="IPR015943">
    <property type="entry name" value="WD40/YVTN_repeat-like_dom_sf"/>
</dbReference>
<dbReference type="InterPro" id="IPR019775">
    <property type="entry name" value="WD40_repeat_CS"/>
</dbReference>
<dbReference type="InterPro" id="IPR036322">
    <property type="entry name" value="WD40_repeat_dom_sf"/>
</dbReference>
<dbReference type="InterPro" id="IPR001680">
    <property type="entry name" value="WD40_rpt"/>
</dbReference>
<dbReference type="InterPro" id="IPR049567">
    <property type="entry name" value="WDR59-like"/>
</dbReference>
<dbReference type="InterPro" id="IPR039456">
    <property type="entry name" value="WDR59_mRING-H2-C3H3C2"/>
</dbReference>
<dbReference type="InterPro" id="IPR049566">
    <property type="entry name" value="WDR59_RTC1-like_RING_Znf"/>
</dbReference>
<dbReference type="PANTHER" id="PTHR46170">
    <property type="entry name" value="GATOR COMPLEX PROTEIN WDR59"/>
    <property type="match status" value="1"/>
</dbReference>
<dbReference type="PANTHER" id="PTHR46170:SF1">
    <property type="entry name" value="GATOR COMPLEX PROTEIN WDR59"/>
    <property type="match status" value="1"/>
</dbReference>
<dbReference type="Pfam" id="PF00400">
    <property type="entry name" value="WD40"/>
    <property type="match status" value="2"/>
</dbReference>
<dbReference type="Pfam" id="PF17120">
    <property type="entry name" value="zf-RING_16"/>
    <property type="match status" value="1"/>
</dbReference>
<dbReference type="SMART" id="SM00591">
    <property type="entry name" value="RWD"/>
    <property type="match status" value="1"/>
</dbReference>
<dbReference type="SMART" id="SM00320">
    <property type="entry name" value="WD40"/>
    <property type="match status" value="5"/>
</dbReference>
<dbReference type="SUPFAM" id="SSF54495">
    <property type="entry name" value="UBC-like"/>
    <property type="match status" value="1"/>
</dbReference>
<dbReference type="SUPFAM" id="SSF50978">
    <property type="entry name" value="WD40 repeat-like"/>
    <property type="match status" value="1"/>
</dbReference>
<dbReference type="PROSITE" id="PS50908">
    <property type="entry name" value="RWD"/>
    <property type="match status" value="1"/>
</dbReference>
<dbReference type="PROSITE" id="PS00678">
    <property type="entry name" value="WD_REPEATS_1"/>
    <property type="match status" value="1"/>
</dbReference>
<dbReference type="PROSITE" id="PS50082">
    <property type="entry name" value="WD_REPEATS_2"/>
    <property type="match status" value="2"/>
</dbReference>
<dbReference type="PROSITE" id="PS50294">
    <property type="entry name" value="WD_REPEATS_REGION"/>
    <property type="match status" value="1"/>
</dbReference>
<sequence>MAARWSSENVVVEFRDSQATAMSVDCLGQHAVLSGRRFLYIVNLDAPFEGHRKISRQSKWDIGAVQWNPHDSFAHYFAASSNQRVDLYKWKDGSGEVGTTLQGHTRVISDLDWAVFEPDLLVTSSVDTYIYIWDIKDTRKPTVALSAVAGASQVKWNKKNANYLATSHDGDVRIWDKRKPSTAVEYLAAHLSKIHGLDWHPDSEHIFATSSQDNSVKFWDYRQPRKYLNILPCQVPVWKARYTPFSNGLVTVMVPQLRRENSLLLWNASDLNAPVHTFVGHDDVVLEFQWRRQKEGSKDYQLVTWSRDQTLRMWRVDYQMQRLCANDILDGVDEFIESISLLPEPEKTPHPQDIDHQPSLSHGEEDAIKEDPPSSLLEEKRSDQLGLPQTLQQEFSLINVQIRNVNVEMDAADRSCTVSVHCSNHRVKMLVTFPAQYPNNAAPSFQFINPTTITSAVKAKLLKILKDTSLQKVKRNQSCLEPCLRQLVSCLESFVNQEDSASSNPFALQNSVTPPLPTFARVTTAYGSYQDANIPFPRTSGARFCGAGYLVYFTRPMTMHRAVSPTEPTPRSLSALSAYHTGLIAPMKIRTEAPGNLRLYSGSPTRSEKEQVSISSFYYKERKSRRWKSKREGSDSGNRPIKAAGKVIIQDVSCLLPVHKSLGELYILNVNDTQETCQKNATSAMLVGRKDLVQVWSLATVATDLCLGPKSDPDLETPWARHPFGRQLLESLWGDRESTRVCGPPLSGARLAHYCQLRDVQTLAMLCSVFEAQSRPQGLPNPFGPFPNRSSNLVVSHSRYPSFTSSGSCSSMSDPGFNTGGWNIAGRETEHISSPWGESSPEELRFGSLTYSDPRERERDQHDKNKRLLDPANTQQFDDFKKCYGEILYRWGLREKRAEVLKFVSCPPDPHKGIEFGVYCSHCRSEVRGTQCAICKGFTFQCAICHVAVRGSSNFCLTCGHGGHTSHMMEWFRTQEVCPTGCGCHCLLESTF</sequence>
<comment type="function">
    <text evidence="1">As a component of the GATOR2 complex, functions as an activator of the amino acid-sensing branch of the mTORC1 signaling pathway. The GATOR2 complex indirectly activates mTORC1 through the inhibition of the GATOR1 subcomplex. GATOR2 probably acts as an E3 ubiquitin-protein ligase toward GATOR1. In the presence of abundant amino acids, the GATOR2 complex mediates ubiquitination of the NPRL2 core component of the GATOR1 complex, leading to GATOR1 inactivation. In the absence of amino acids, GATOR2 is inhibited, activating the GATOR1 complex.</text>
</comment>
<comment type="activity regulation">
    <text evidence="1">The GATOR2 complex is negatively regulated by the upstream amino acid sensors CASTOR1 and SESN2, which sequester the GATOR2 complex in absence of amino acids. In the presence of abundant amino acids, GATOR2 is released from CASTOR1 and SESN2 and activated.</text>
</comment>
<comment type="subunit">
    <text evidence="1 4">Component of the GATOR2 subcomplex, composed of MIOS, SEC13, SEH1L, WDR24 and WDR59. The GATOR2 complex interacts with CASTOR1 and CASTOR2; the interaction is negatively regulated by arginine. The GATOR2 complex interacts with SESN1, SESN2 and SESN3; the interaction is negatively regulated by amino acids (By similarity). Interacts with DDB1-CUL4A/B E3 ligase complexes (PubMed:17041588).</text>
</comment>
<comment type="subcellular location">
    <subcellularLocation>
        <location evidence="1">Lysosome membrane</location>
    </subcellularLocation>
</comment>
<comment type="alternative products">
    <event type="alternative splicing"/>
    <isoform>
        <id>Q8C0M0-1</id>
        <name>1</name>
        <sequence type="displayed"/>
    </isoform>
    <isoform>
        <id>Q8C0M0-2</id>
        <name>2</name>
        <sequence type="described" ref="VSP_023886"/>
    </isoform>
    <isoform>
        <id>Q8C0M0-3</id>
        <name>3</name>
        <sequence type="described" ref="VSP_023885 VSP_023886"/>
    </isoform>
</comment>
<comment type="similarity">
    <text evidence="7">Belongs to the WD repeat WDR59 family.</text>
</comment>
<comment type="sequence caution" evidence="7">
    <conflict type="erroneous initiation">
        <sequence resource="EMBL-CDS" id="BAC30708"/>
    </conflict>
    <text>Truncated N-terminus.</text>
</comment>
<comment type="sequence caution" evidence="7">
    <conflict type="erroneous initiation">
        <sequence resource="EMBL-CDS" id="BAD32579"/>
    </conflict>
    <text>Extended N-terminus.</text>
</comment>
<comment type="sequence caution" evidence="7">
    <conflict type="erroneous termination">
        <sequence resource="EMBL-CDS" id="BAE42108"/>
    </conflict>
    <text>Truncated C-terminus.</text>
</comment>
<gene>
    <name evidence="10" type="primary">Wdr59</name>
    <name evidence="8" type="synonym">Cdw12</name>
    <name evidence="9" type="synonym">Kiaa1923</name>
</gene>
<evidence type="ECO:0000250" key="1">
    <source>
        <dbReference type="UniProtKB" id="Q6PJI9"/>
    </source>
</evidence>
<evidence type="ECO:0000255" key="2">
    <source>
        <dbReference type="PROSITE-ProRule" id="PRU00179"/>
    </source>
</evidence>
<evidence type="ECO:0000256" key="3">
    <source>
        <dbReference type="SAM" id="MobiDB-lite"/>
    </source>
</evidence>
<evidence type="ECO:0000269" key="4">
    <source>
    </source>
</evidence>
<evidence type="ECO:0000303" key="5">
    <source>
    </source>
</evidence>
<evidence type="ECO:0000303" key="6">
    <source>
    </source>
</evidence>
<evidence type="ECO:0000305" key="7"/>
<evidence type="ECO:0000312" key="8">
    <source>
        <dbReference type="EMBL" id="ABK41112.1"/>
    </source>
</evidence>
<evidence type="ECO:0000312" key="9">
    <source>
        <dbReference type="EMBL" id="BAD32579.1"/>
    </source>
</evidence>
<evidence type="ECO:0000312" key="10">
    <source>
        <dbReference type="MGI" id="MGI:2442115"/>
    </source>
</evidence>
<evidence type="ECO:0007744" key="11">
    <source>
    </source>
</evidence>
<reference key="1">
    <citation type="journal article" date="2006" name="Nat. Cell Biol.">
        <title>CUL4-DDB1 ubiquitin ligase interacts with multiple WD40-repeat proteins and regulates histone methylation.</title>
        <authorList>
            <person name="Higa L.A."/>
            <person name="Wu M."/>
            <person name="Ye T."/>
            <person name="Kobayashi R."/>
            <person name="Sun H."/>
            <person name="Zhang H."/>
        </authorList>
    </citation>
    <scope>NUCLEOTIDE SEQUENCE [MRNA] (ISOFORM 1)</scope>
    <scope>INTERACTION WITH CUL4</scope>
</reference>
<reference key="2">
    <citation type="journal article" date="2004" name="DNA Res.">
        <title>Prediction of the coding sequences of mouse homologues of KIAA gene: IV. The complete nucleotide sequences of 500 mouse KIAA-homologous cDNAs identified by screening of terminal sequences of cDNA clones randomly sampled from size-fractionated libraries.</title>
        <authorList>
            <person name="Okazaki N."/>
            <person name="Kikuno R."/>
            <person name="Ohara R."/>
            <person name="Inamoto S."/>
            <person name="Koseki H."/>
            <person name="Hiraoka S."/>
            <person name="Saga Y."/>
            <person name="Seino S."/>
            <person name="Nishimura M."/>
            <person name="Kaisho T."/>
            <person name="Hoshino K."/>
            <person name="Kitamura H."/>
            <person name="Nagase T."/>
            <person name="Ohara O."/>
            <person name="Koga H."/>
        </authorList>
    </citation>
    <scope>NUCLEOTIDE SEQUENCE [LARGE SCALE MRNA] (ISOFORM 3)</scope>
    <source>
        <tissue>Fetal brain</tissue>
    </source>
</reference>
<reference key="3">
    <citation type="journal article" date="2005" name="Science">
        <title>The transcriptional landscape of the mammalian genome.</title>
        <authorList>
            <person name="Carninci P."/>
            <person name="Kasukawa T."/>
            <person name="Katayama S."/>
            <person name="Gough J."/>
            <person name="Frith M.C."/>
            <person name="Maeda N."/>
            <person name="Oyama R."/>
            <person name="Ravasi T."/>
            <person name="Lenhard B."/>
            <person name="Wells C."/>
            <person name="Kodzius R."/>
            <person name="Shimokawa K."/>
            <person name="Bajic V.B."/>
            <person name="Brenner S.E."/>
            <person name="Batalov S."/>
            <person name="Forrest A.R."/>
            <person name="Zavolan M."/>
            <person name="Davis M.J."/>
            <person name="Wilming L.G."/>
            <person name="Aidinis V."/>
            <person name="Allen J.E."/>
            <person name="Ambesi-Impiombato A."/>
            <person name="Apweiler R."/>
            <person name="Aturaliya R.N."/>
            <person name="Bailey T.L."/>
            <person name="Bansal M."/>
            <person name="Baxter L."/>
            <person name="Beisel K.W."/>
            <person name="Bersano T."/>
            <person name="Bono H."/>
            <person name="Chalk A.M."/>
            <person name="Chiu K.P."/>
            <person name="Choudhary V."/>
            <person name="Christoffels A."/>
            <person name="Clutterbuck D.R."/>
            <person name="Crowe M.L."/>
            <person name="Dalla E."/>
            <person name="Dalrymple B.P."/>
            <person name="de Bono B."/>
            <person name="Della Gatta G."/>
            <person name="di Bernardo D."/>
            <person name="Down T."/>
            <person name="Engstrom P."/>
            <person name="Fagiolini M."/>
            <person name="Faulkner G."/>
            <person name="Fletcher C.F."/>
            <person name="Fukushima T."/>
            <person name="Furuno M."/>
            <person name="Futaki S."/>
            <person name="Gariboldi M."/>
            <person name="Georgii-Hemming P."/>
            <person name="Gingeras T.R."/>
            <person name="Gojobori T."/>
            <person name="Green R.E."/>
            <person name="Gustincich S."/>
            <person name="Harbers M."/>
            <person name="Hayashi Y."/>
            <person name="Hensch T.K."/>
            <person name="Hirokawa N."/>
            <person name="Hill D."/>
            <person name="Huminiecki L."/>
            <person name="Iacono M."/>
            <person name="Ikeo K."/>
            <person name="Iwama A."/>
            <person name="Ishikawa T."/>
            <person name="Jakt M."/>
            <person name="Kanapin A."/>
            <person name="Katoh M."/>
            <person name="Kawasawa Y."/>
            <person name="Kelso J."/>
            <person name="Kitamura H."/>
            <person name="Kitano H."/>
            <person name="Kollias G."/>
            <person name="Krishnan S.P."/>
            <person name="Kruger A."/>
            <person name="Kummerfeld S.K."/>
            <person name="Kurochkin I.V."/>
            <person name="Lareau L.F."/>
            <person name="Lazarevic D."/>
            <person name="Lipovich L."/>
            <person name="Liu J."/>
            <person name="Liuni S."/>
            <person name="McWilliam S."/>
            <person name="Madan Babu M."/>
            <person name="Madera M."/>
            <person name="Marchionni L."/>
            <person name="Matsuda H."/>
            <person name="Matsuzawa S."/>
            <person name="Miki H."/>
            <person name="Mignone F."/>
            <person name="Miyake S."/>
            <person name="Morris K."/>
            <person name="Mottagui-Tabar S."/>
            <person name="Mulder N."/>
            <person name="Nakano N."/>
            <person name="Nakauchi H."/>
            <person name="Ng P."/>
            <person name="Nilsson R."/>
            <person name="Nishiguchi S."/>
            <person name="Nishikawa S."/>
            <person name="Nori F."/>
            <person name="Ohara O."/>
            <person name="Okazaki Y."/>
            <person name="Orlando V."/>
            <person name="Pang K.C."/>
            <person name="Pavan W.J."/>
            <person name="Pavesi G."/>
            <person name="Pesole G."/>
            <person name="Petrovsky N."/>
            <person name="Piazza S."/>
            <person name="Reed J."/>
            <person name="Reid J.F."/>
            <person name="Ring B.Z."/>
            <person name="Ringwald M."/>
            <person name="Rost B."/>
            <person name="Ruan Y."/>
            <person name="Salzberg S.L."/>
            <person name="Sandelin A."/>
            <person name="Schneider C."/>
            <person name="Schoenbach C."/>
            <person name="Sekiguchi K."/>
            <person name="Semple C.A."/>
            <person name="Seno S."/>
            <person name="Sessa L."/>
            <person name="Sheng Y."/>
            <person name="Shibata Y."/>
            <person name="Shimada H."/>
            <person name="Shimada K."/>
            <person name="Silva D."/>
            <person name="Sinclair B."/>
            <person name="Sperling S."/>
            <person name="Stupka E."/>
            <person name="Sugiura K."/>
            <person name="Sultana R."/>
            <person name="Takenaka Y."/>
            <person name="Taki K."/>
            <person name="Tammoja K."/>
            <person name="Tan S.L."/>
            <person name="Tang S."/>
            <person name="Taylor M.S."/>
            <person name="Tegner J."/>
            <person name="Teichmann S.A."/>
            <person name="Ueda H.R."/>
            <person name="van Nimwegen E."/>
            <person name="Verardo R."/>
            <person name="Wei C.L."/>
            <person name="Yagi K."/>
            <person name="Yamanishi H."/>
            <person name="Zabarovsky E."/>
            <person name="Zhu S."/>
            <person name="Zimmer A."/>
            <person name="Hide W."/>
            <person name="Bult C."/>
            <person name="Grimmond S.M."/>
            <person name="Teasdale R.D."/>
            <person name="Liu E.T."/>
            <person name="Brusic V."/>
            <person name="Quackenbush J."/>
            <person name="Wahlestedt C."/>
            <person name="Mattick J.S."/>
            <person name="Hume D.A."/>
            <person name="Kai C."/>
            <person name="Sasaki D."/>
            <person name="Tomaru Y."/>
            <person name="Fukuda S."/>
            <person name="Kanamori-Katayama M."/>
            <person name="Suzuki M."/>
            <person name="Aoki J."/>
            <person name="Arakawa T."/>
            <person name="Iida J."/>
            <person name="Imamura K."/>
            <person name="Itoh M."/>
            <person name="Kato T."/>
            <person name="Kawaji H."/>
            <person name="Kawagashira N."/>
            <person name="Kawashima T."/>
            <person name="Kojima M."/>
            <person name="Kondo S."/>
            <person name="Konno H."/>
            <person name="Nakano K."/>
            <person name="Ninomiya N."/>
            <person name="Nishio T."/>
            <person name="Okada M."/>
            <person name="Plessy C."/>
            <person name="Shibata K."/>
            <person name="Shiraki T."/>
            <person name="Suzuki S."/>
            <person name="Tagami M."/>
            <person name="Waki K."/>
            <person name="Watahiki A."/>
            <person name="Okamura-Oho Y."/>
            <person name="Suzuki H."/>
            <person name="Kawai J."/>
            <person name="Hayashizaki Y."/>
        </authorList>
    </citation>
    <scope>NUCLEOTIDE SEQUENCE [LARGE SCALE MRNA] (ISOFORM 2)</scope>
    <source>
        <strain>C57BL/6J</strain>
        <strain>NOD</strain>
        <tissue>Aorta</tissue>
        <tissue>Head</tissue>
        <tissue>Heart</tissue>
        <tissue>Testis</tissue>
    </source>
</reference>
<reference key="4">
    <citation type="journal article" date="2004" name="Genome Res.">
        <title>The status, quality, and expansion of the NIH full-length cDNA project: the Mammalian Gene Collection (MGC).</title>
        <authorList>
            <consortium name="The MGC Project Team"/>
        </authorList>
    </citation>
    <scope>NUCLEOTIDE SEQUENCE [LARGE SCALE MRNA] (ISOFORM 1)</scope>
    <source>
        <strain>C57BL/6J</strain>
        <tissue>Brain</tissue>
    </source>
</reference>
<reference key="5">
    <citation type="journal article" date="2010" name="Cell">
        <title>A tissue-specific atlas of mouse protein phosphorylation and expression.</title>
        <authorList>
            <person name="Huttlin E.L."/>
            <person name="Jedrychowski M.P."/>
            <person name="Elias J.E."/>
            <person name="Goswami T."/>
            <person name="Rad R."/>
            <person name="Beausoleil S.A."/>
            <person name="Villen J."/>
            <person name="Haas W."/>
            <person name="Sowa M.E."/>
            <person name="Gygi S.P."/>
        </authorList>
    </citation>
    <scope>PHOSPHORYLATION [LARGE SCALE ANALYSIS] AT SER-839 AND SER-840</scope>
    <scope>IDENTIFICATION BY MASS SPECTROMETRY [LARGE SCALE ANALYSIS]</scope>
    <source>
        <tissue>Brain</tissue>
        <tissue>Brown adipose tissue</tissue>
        <tissue>Heart</tissue>
        <tissue>Kidney</tissue>
        <tissue>Pancreas</tissue>
        <tissue>Spleen</tissue>
        <tissue>Testis</tissue>
    </source>
</reference>
<proteinExistence type="evidence at protein level"/>